<proteinExistence type="inferred from homology"/>
<evidence type="ECO:0000255" key="1">
    <source>
        <dbReference type="HAMAP-Rule" id="MF_00117"/>
    </source>
</evidence>
<dbReference type="EMBL" id="CP000726">
    <property type="protein sequence ID" value="ABS32488.1"/>
    <property type="molecule type" value="Genomic_DNA"/>
</dbReference>
<dbReference type="RefSeq" id="WP_012048141.1">
    <property type="nucleotide sequence ID" value="NC_009697.1"/>
</dbReference>
<dbReference type="SMR" id="A7FY92"/>
<dbReference type="GeneID" id="5184258"/>
<dbReference type="KEGG" id="cba:CLB_3178"/>
<dbReference type="HOGENOM" id="CLU_054493_1_0_9"/>
<dbReference type="GO" id="GO:0005737">
    <property type="term" value="C:cytoplasm"/>
    <property type="evidence" value="ECO:0007669"/>
    <property type="project" value="UniProtKB-SubCell"/>
</dbReference>
<dbReference type="GO" id="GO:0044183">
    <property type="term" value="F:protein folding chaperone"/>
    <property type="evidence" value="ECO:0007669"/>
    <property type="project" value="TreeGrafter"/>
</dbReference>
<dbReference type="GO" id="GO:0051082">
    <property type="term" value="F:unfolded protein binding"/>
    <property type="evidence" value="ECO:0007669"/>
    <property type="project" value="UniProtKB-UniRule"/>
</dbReference>
<dbReference type="GO" id="GO:0042026">
    <property type="term" value="P:protein refolding"/>
    <property type="evidence" value="ECO:0007669"/>
    <property type="project" value="TreeGrafter"/>
</dbReference>
<dbReference type="CDD" id="cd00498">
    <property type="entry name" value="Hsp33"/>
    <property type="match status" value="1"/>
</dbReference>
<dbReference type="Gene3D" id="3.55.30.10">
    <property type="entry name" value="Hsp33 domain"/>
    <property type="match status" value="1"/>
</dbReference>
<dbReference type="Gene3D" id="3.90.1280.10">
    <property type="entry name" value="HSP33 redox switch-like"/>
    <property type="match status" value="1"/>
</dbReference>
<dbReference type="HAMAP" id="MF_00117">
    <property type="entry name" value="HslO"/>
    <property type="match status" value="1"/>
</dbReference>
<dbReference type="InterPro" id="IPR000397">
    <property type="entry name" value="Heat_shock_Hsp33"/>
</dbReference>
<dbReference type="InterPro" id="IPR016154">
    <property type="entry name" value="Heat_shock_Hsp33_C"/>
</dbReference>
<dbReference type="InterPro" id="IPR016153">
    <property type="entry name" value="Heat_shock_Hsp33_N"/>
</dbReference>
<dbReference type="NCBIfam" id="NF001033">
    <property type="entry name" value="PRK00114.1"/>
    <property type="match status" value="1"/>
</dbReference>
<dbReference type="PANTHER" id="PTHR30111">
    <property type="entry name" value="33 KDA CHAPERONIN"/>
    <property type="match status" value="1"/>
</dbReference>
<dbReference type="PANTHER" id="PTHR30111:SF1">
    <property type="entry name" value="33 KDA CHAPERONIN"/>
    <property type="match status" value="1"/>
</dbReference>
<dbReference type="Pfam" id="PF01430">
    <property type="entry name" value="HSP33"/>
    <property type="match status" value="1"/>
</dbReference>
<dbReference type="PIRSF" id="PIRSF005261">
    <property type="entry name" value="Heat_shock_Hsp33"/>
    <property type="match status" value="1"/>
</dbReference>
<dbReference type="SUPFAM" id="SSF64397">
    <property type="entry name" value="Hsp33 domain"/>
    <property type="match status" value="1"/>
</dbReference>
<dbReference type="SUPFAM" id="SSF118352">
    <property type="entry name" value="HSP33 redox switch-like"/>
    <property type="match status" value="1"/>
</dbReference>
<comment type="function">
    <text evidence="1">Redox regulated molecular chaperone. Protects both thermally unfolding and oxidatively damaged proteins from irreversible aggregation. Plays an important role in the bacterial defense system toward oxidative stress.</text>
</comment>
<comment type="subcellular location">
    <subcellularLocation>
        <location evidence="1">Cytoplasm</location>
    </subcellularLocation>
</comment>
<comment type="PTM">
    <text evidence="1">Under oxidizing conditions two disulfide bonds are formed involving the reactive cysteines. Under reducing conditions zinc is bound to the reactive cysteines and the protein is inactive.</text>
</comment>
<comment type="similarity">
    <text evidence="1">Belongs to the HSP33 family.</text>
</comment>
<keyword id="KW-0143">Chaperone</keyword>
<keyword id="KW-0963">Cytoplasm</keyword>
<keyword id="KW-1015">Disulfide bond</keyword>
<keyword id="KW-0676">Redox-active center</keyword>
<keyword id="KW-0862">Zinc</keyword>
<name>HSLO_CLOB1</name>
<feature type="chain" id="PRO_1000015533" description="33 kDa chaperonin">
    <location>
        <begin position="1"/>
        <end position="296"/>
    </location>
</feature>
<feature type="disulfide bond" description="Redox-active" evidence="1">
    <location>
        <begin position="238"/>
        <end position="240"/>
    </location>
</feature>
<feature type="disulfide bond" description="Redox-active" evidence="1">
    <location>
        <begin position="271"/>
        <end position="274"/>
    </location>
</feature>
<gene>
    <name evidence="1" type="primary">hslO</name>
    <name type="ordered locus">CLB_3178</name>
</gene>
<accession>A7FY92</accession>
<organism>
    <name type="scientific">Clostridium botulinum (strain ATCC 19397 / Type A)</name>
    <dbReference type="NCBI Taxonomy" id="441770"/>
    <lineage>
        <taxon>Bacteria</taxon>
        <taxon>Bacillati</taxon>
        <taxon>Bacillota</taxon>
        <taxon>Clostridia</taxon>
        <taxon>Eubacteriales</taxon>
        <taxon>Clostridiaceae</taxon>
        <taxon>Clostridium</taxon>
    </lineage>
</organism>
<protein>
    <recommendedName>
        <fullName evidence="1">33 kDa chaperonin</fullName>
    </recommendedName>
    <alternativeName>
        <fullName evidence="1">Heat shock protein 33 homolog</fullName>
        <shortName evidence="1">HSP33</shortName>
    </alternativeName>
</protein>
<reference key="1">
    <citation type="journal article" date="2007" name="PLoS ONE">
        <title>Analysis of the neurotoxin complex genes in Clostridium botulinum A1-A4 and B1 strains: BoNT/A3, /Ba4 and /B1 clusters are located within plasmids.</title>
        <authorList>
            <person name="Smith T.J."/>
            <person name="Hill K.K."/>
            <person name="Foley B.T."/>
            <person name="Detter J.C."/>
            <person name="Munk A.C."/>
            <person name="Bruce D.C."/>
            <person name="Doggett N.A."/>
            <person name="Smith L.A."/>
            <person name="Marks J.D."/>
            <person name="Xie G."/>
            <person name="Brettin T.S."/>
        </authorList>
    </citation>
    <scope>NUCLEOTIDE SEQUENCE [LARGE SCALE GENOMIC DNA]</scope>
    <source>
        <strain>ATCC 19397 / Type A</strain>
    </source>
</reference>
<sequence length="296" mass="32308">MKDKLVKAIAKDGQVRIIGAITTELVNEGVRLHNCAPTAAAALGRMLTAGALMGTTLKSEKDTLTLQIHGGGIAKGVVITSYADGHVKGYIGNPTADIEPNSKGKLDVSGIIGKNGNLLVIRDMGLKEPYIGQVPIYTGEIGEDLAYYYTVSEQTPSAVGLGVLVDKDLSIKSAGGFIIQMMPGADEMLADLISYRLEEIPSITEMISKGMTIEEILEYIFEDMDLKILESIVPEYRCDCSREKVERALASIGQKDLKEIYDEGKEEELKCHFCNKAYVFSHDEVGDILENYYSEK</sequence>